<dbReference type="EMBL" id="AF462392">
    <property type="protein sequence ID" value="AAQ04821.1"/>
    <property type="molecule type" value="mRNA"/>
</dbReference>
<dbReference type="RefSeq" id="NP_001083524.1">
    <property type="nucleotide sequence ID" value="NM_001090055.1"/>
</dbReference>
<dbReference type="SMR" id="Q71M21"/>
<dbReference type="GeneID" id="398972"/>
<dbReference type="KEGG" id="xla:398972"/>
<dbReference type="AGR" id="Xenbase:XB-GENE-1011033"/>
<dbReference type="CTD" id="398972"/>
<dbReference type="Xenbase" id="XB-GENE-1011033">
    <property type="gene designation" value="arhgap21.L"/>
</dbReference>
<dbReference type="OrthoDB" id="6281275at2759"/>
<dbReference type="Proteomes" id="UP000186698">
    <property type="component" value="Chromosome 6L"/>
</dbReference>
<dbReference type="Bgee" id="398972">
    <property type="expression patterns" value="Expressed in egg cell and 19 other cell types or tissues"/>
</dbReference>
<dbReference type="GO" id="GO:0070161">
    <property type="term" value="C:anchoring junction"/>
    <property type="evidence" value="ECO:0007669"/>
    <property type="project" value="UniProtKB-SubCell"/>
</dbReference>
<dbReference type="GO" id="GO:0030659">
    <property type="term" value="C:cytoplasmic vesicle membrane"/>
    <property type="evidence" value="ECO:0007669"/>
    <property type="project" value="UniProtKB-SubCell"/>
</dbReference>
<dbReference type="GO" id="GO:0005856">
    <property type="term" value="C:cytoskeleton"/>
    <property type="evidence" value="ECO:0007669"/>
    <property type="project" value="UniProtKB-SubCell"/>
</dbReference>
<dbReference type="GO" id="GO:0000139">
    <property type="term" value="C:Golgi membrane"/>
    <property type="evidence" value="ECO:0007669"/>
    <property type="project" value="UniProtKB-SubCell"/>
</dbReference>
<dbReference type="GO" id="GO:0005096">
    <property type="term" value="F:GTPase activator activity"/>
    <property type="evidence" value="ECO:0007669"/>
    <property type="project" value="UniProtKB-KW"/>
</dbReference>
<dbReference type="GO" id="GO:0051645">
    <property type="term" value="P:Golgi localization"/>
    <property type="evidence" value="ECO:0000318"/>
    <property type="project" value="GO_Central"/>
</dbReference>
<dbReference type="GO" id="GO:0007165">
    <property type="term" value="P:signal transduction"/>
    <property type="evidence" value="ECO:0007669"/>
    <property type="project" value="InterPro"/>
</dbReference>
<dbReference type="CDD" id="cd06756">
    <property type="entry name" value="PDZ_ARHGAP21_23-like"/>
    <property type="match status" value="1"/>
</dbReference>
<dbReference type="CDD" id="cd01253">
    <property type="entry name" value="PH_ARHGAP21-like"/>
    <property type="match status" value="1"/>
</dbReference>
<dbReference type="CDD" id="cd04395">
    <property type="entry name" value="RhoGAP_ARHGAP21"/>
    <property type="match status" value="1"/>
</dbReference>
<dbReference type="FunFam" id="1.10.555.10:FF:000014">
    <property type="entry name" value="Rho GTPase activating protein 21"/>
    <property type="match status" value="1"/>
</dbReference>
<dbReference type="FunFam" id="2.30.42.10:FF:000066">
    <property type="entry name" value="Rho GTPase activating protein 21"/>
    <property type="match status" value="1"/>
</dbReference>
<dbReference type="Gene3D" id="1.20.5.220">
    <property type="match status" value="1"/>
</dbReference>
<dbReference type="Gene3D" id="2.30.42.10">
    <property type="match status" value="1"/>
</dbReference>
<dbReference type="Gene3D" id="2.30.29.30">
    <property type="entry name" value="Pleckstrin-homology domain (PH domain)/Phosphotyrosine-binding domain (PTB)"/>
    <property type="match status" value="1"/>
</dbReference>
<dbReference type="Gene3D" id="1.10.555.10">
    <property type="entry name" value="Rho GTPase activation protein"/>
    <property type="match status" value="1"/>
</dbReference>
<dbReference type="InterPro" id="IPR001478">
    <property type="entry name" value="PDZ"/>
</dbReference>
<dbReference type="InterPro" id="IPR041489">
    <property type="entry name" value="PDZ_6"/>
</dbReference>
<dbReference type="InterPro" id="IPR036034">
    <property type="entry name" value="PDZ_sf"/>
</dbReference>
<dbReference type="InterPro" id="IPR011993">
    <property type="entry name" value="PH-like_dom_sf"/>
</dbReference>
<dbReference type="InterPro" id="IPR001849">
    <property type="entry name" value="PH_domain"/>
</dbReference>
<dbReference type="InterPro" id="IPR008936">
    <property type="entry name" value="Rho_GTPase_activation_prot"/>
</dbReference>
<dbReference type="InterPro" id="IPR000198">
    <property type="entry name" value="RhoGAP_dom"/>
</dbReference>
<dbReference type="PANTHER" id="PTHR23175">
    <property type="entry name" value="PDZ DOMAIN-CONTAINING PROTEIN"/>
    <property type="match status" value="1"/>
</dbReference>
<dbReference type="PANTHER" id="PTHR23175:SF16">
    <property type="entry name" value="RHO GTPASE-ACTIVATING PROTEIN 21"/>
    <property type="match status" value="1"/>
</dbReference>
<dbReference type="Pfam" id="PF17820">
    <property type="entry name" value="PDZ_6"/>
    <property type="match status" value="1"/>
</dbReference>
<dbReference type="Pfam" id="PF00169">
    <property type="entry name" value="PH"/>
    <property type="match status" value="1"/>
</dbReference>
<dbReference type="Pfam" id="PF00620">
    <property type="entry name" value="RhoGAP"/>
    <property type="match status" value="1"/>
</dbReference>
<dbReference type="SMART" id="SM00228">
    <property type="entry name" value="PDZ"/>
    <property type="match status" value="1"/>
</dbReference>
<dbReference type="SMART" id="SM00233">
    <property type="entry name" value="PH"/>
    <property type="match status" value="1"/>
</dbReference>
<dbReference type="SMART" id="SM00324">
    <property type="entry name" value="RhoGAP"/>
    <property type="match status" value="1"/>
</dbReference>
<dbReference type="SUPFAM" id="SSF48350">
    <property type="entry name" value="GTPase activation domain, GAP"/>
    <property type="match status" value="1"/>
</dbReference>
<dbReference type="SUPFAM" id="SSF50156">
    <property type="entry name" value="PDZ domain-like"/>
    <property type="match status" value="1"/>
</dbReference>
<dbReference type="SUPFAM" id="SSF50729">
    <property type="entry name" value="PH domain-like"/>
    <property type="match status" value="1"/>
</dbReference>
<dbReference type="PROSITE" id="PS50106">
    <property type="entry name" value="PDZ"/>
    <property type="match status" value="1"/>
</dbReference>
<dbReference type="PROSITE" id="PS50003">
    <property type="entry name" value="PH_DOMAIN"/>
    <property type="match status" value="1"/>
</dbReference>
<dbReference type="PROSITE" id="PS50238">
    <property type="entry name" value="RHOGAP"/>
    <property type="match status" value="1"/>
</dbReference>
<feature type="chain" id="PRO_0000305248" description="Rho GTPase-activating protein 21-B">
    <location>
        <begin position="1"/>
        <end position="1902"/>
    </location>
</feature>
<feature type="domain" description="PDZ" evidence="2">
    <location>
        <begin position="77"/>
        <end position="162"/>
    </location>
</feature>
<feature type="domain" description="PH" evidence="3">
    <location>
        <begin position="903"/>
        <end position="1016"/>
    </location>
</feature>
<feature type="domain" description="Rho-GAP" evidence="4">
    <location>
        <begin position="1103"/>
        <end position="1295"/>
    </location>
</feature>
<feature type="region of interest" description="Disordered" evidence="5">
    <location>
        <begin position="1"/>
        <end position="44"/>
    </location>
</feature>
<feature type="region of interest" description="Disordered" evidence="5">
    <location>
        <begin position="78"/>
        <end position="97"/>
    </location>
</feature>
<feature type="region of interest" description="Disordered" evidence="5">
    <location>
        <begin position="284"/>
        <end position="317"/>
    </location>
</feature>
<feature type="region of interest" description="Disordered" evidence="5">
    <location>
        <begin position="348"/>
        <end position="369"/>
    </location>
</feature>
<feature type="region of interest" description="Disordered" evidence="5">
    <location>
        <begin position="409"/>
        <end position="450"/>
    </location>
</feature>
<feature type="region of interest" description="Disordered" evidence="5">
    <location>
        <begin position="581"/>
        <end position="603"/>
    </location>
</feature>
<feature type="region of interest" description="Disordered" evidence="5">
    <location>
        <begin position="613"/>
        <end position="632"/>
    </location>
</feature>
<feature type="region of interest" description="Disordered" evidence="5">
    <location>
        <begin position="879"/>
        <end position="902"/>
    </location>
</feature>
<feature type="region of interest" description="Disordered" evidence="5">
    <location>
        <begin position="1039"/>
        <end position="1095"/>
    </location>
</feature>
<feature type="region of interest" description="Disordered" evidence="5">
    <location>
        <begin position="1306"/>
        <end position="1357"/>
    </location>
</feature>
<feature type="region of interest" description="Disordered" evidence="5">
    <location>
        <begin position="1375"/>
        <end position="1394"/>
    </location>
</feature>
<feature type="region of interest" description="Disordered" evidence="5">
    <location>
        <begin position="1494"/>
        <end position="1520"/>
    </location>
</feature>
<feature type="region of interest" description="Disordered" evidence="5">
    <location>
        <begin position="1559"/>
        <end position="1704"/>
    </location>
</feature>
<feature type="region of interest" description="Disordered" evidence="5">
    <location>
        <begin position="1729"/>
        <end position="1748"/>
    </location>
</feature>
<feature type="region of interest" description="Disordered" evidence="5">
    <location>
        <begin position="1803"/>
        <end position="1890"/>
    </location>
</feature>
<feature type="compositionally biased region" description="Polar residues" evidence="5">
    <location>
        <begin position="10"/>
        <end position="22"/>
    </location>
</feature>
<feature type="compositionally biased region" description="Low complexity" evidence="5">
    <location>
        <begin position="305"/>
        <end position="317"/>
    </location>
</feature>
<feature type="compositionally biased region" description="Polar residues" evidence="5">
    <location>
        <begin position="409"/>
        <end position="424"/>
    </location>
</feature>
<feature type="compositionally biased region" description="Polar residues" evidence="5">
    <location>
        <begin position="1039"/>
        <end position="1063"/>
    </location>
</feature>
<feature type="compositionally biased region" description="Basic and acidic residues" evidence="5">
    <location>
        <begin position="1068"/>
        <end position="1082"/>
    </location>
</feature>
<feature type="compositionally biased region" description="Low complexity" evidence="5">
    <location>
        <begin position="1339"/>
        <end position="1357"/>
    </location>
</feature>
<feature type="compositionally biased region" description="Polar residues" evidence="5">
    <location>
        <begin position="1494"/>
        <end position="1511"/>
    </location>
</feature>
<feature type="compositionally biased region" description="Basic and acidic residues" evidence="5">
    <location>
        <begin position="1575"/>
        <end position="1585"/>
    </location>
</feature>
<feature type="compositionally biased region" description="Basic and acidic residues" evidence="5">
    <location>
        <begin position="1601"/>
        <end position="1613"/>
    </location>
</feature>
<feature type="compositionally biased region" description="Polar residues" evidence="5">
    <location>
        <begin position="1614"/>
        <end position="1630"/>
    </location>
</feature>
<feature type="compositionally biased region" description="Basic and acidic residues" evidence="5">
    <location>
        <begin position="1634"/>
        <end position="1652"/>
    </location>
</feature>
<feature type="compositionally biased region" description="Basic and acidic residues" evidence="5">
    <location>
        <begin position="1661"/>
        <end position="1673"/>
    </location>
</feature>
<feature type="compositionally biased region" description="Basic residues" evidence="5">
    <location>
        <begin position="1737"/>
        <end position="1748"/>
    </location>
</feature>
<feature type="compositionally biased region" description="Polar residues" evidence="5">
    <location>
        <begin position="1865"/>
        <end position="1878"/>
    </location>
</feature>
<feature type="site" description="Arginine finger; crucial for GTP hydrolysis by stabilizing the transition state" evidence="4">
    <location>
        <position position="1140"/>
    </location>
</feature>
<protein>
    <recommendedName>
        <fullName>Rho GTPase-activating protein 21-B</fullName>
    </recommendedName>
    <alternativeName>
        <fullName>Rho-type GTPase-activating protein 21-B</fullName>
    </alternativeName>
    <alternativeName>
        <fullName>XrGAP</fullName>
    </alternativeName>
</protein>
<name>RH21B_XENLA</name>
<organism>
    <name type="scientific">Xenopus laevis</name>
    <name type="common">African clawed frog</name>
    <dbReference type="NCBI Taxonomy" id="8355"/>
    <lineage>
        <taxon>Eukaryota</taxon>
        <taxon>Metazoa</taxon>
        <taxon>Chordata</taxon>
        <taxon>Craniata</taxon>
        <taxon>Vertebrata</taxon>
        <taxon>Euteleostomi</taxon>
        <taxon>Amphibia</taxon>
        <taxon>Batrachia</taxon>
        <taxon>Anura</taxon>
        <taxon>Pipoidea</taxon>
        <taxon>Pipidae</taxon>
        <taxon>Xenopodinae</taxon>
        <taxon>Xenopus</taxon>
        <taxon>Xenopus</taxon>
    </lineage>
</organism>
<sequence>MATRRAIVPEQQQEPSSPASEISKNKDWQEQSEMVSPTEEEGFCWPGPKSVALRRASEGFGFTLRHFIVYPPESAVHTSVKDEENGNRGVNAGRPRNRLEPMDTIFVKQVKEGGPAHEAGLCTGDRIIKVNGESVIGKTYSQVIALIQNSDSTLELSVMPKDEDILQLAYSQDAYLKGNDSYSGNAQNIPEPPPLCYPRVQPEASVMAQPVEVLPSGTSLATQQSSCPLRTATTQPERSYRVEIQVPPSPTDIVKSNTAVCVCNEAVRTVIVPSEKVVDLSSNRTNRAGPLHRTGLADPSILKRTTSPSSSTPNVPMVPSTRHFDSAGVIGKPPSYGGLAENMFSTRPAAHAEESPSPTNHYASPGSHQHIDWRDYKTYKEYIDNRRMLMYGCRTIQERLDSLRAASQNTTDYNQMLPNRSSGQVRRRSTSHDRVPQSAQMRKRSVSQERLEDPVLMKEWPRSASQDTLTSPAVASRNHRSELWDYLTRKGDFDQFIVETHSNGERNTNYQWSGFTEQDDRRGINERPRQHAFHMSLRSPNFTMAPVPFTSSDNRRGGARVLASAHPLQMVHPDMKTIQPTRNFQNSSRAPHPRPALSDRSGFAISKSNSVKIPTPYAAKPHSPSVRSDDGIVRDQKPVNYLHVGGPQNCQRKTQTESALGFHLDSIKTSMSASSSSPSTSQKVDVKITQSPEANAGDSNAVLSPVDQVVLRERPSPGQQTSPPIRQQSYIFAVNEQEGASDTTCWLPNDARREVHIKRIEQRKASGSNSPGDSLASIPFIDEPTSPSIDHEIGNIPASAVISISAQPLPTITTVPPSPTSPVPLMRRHFSHDHDSIRPIVLEVNSKTERSKSCDEGLDDYKEDGKLCLKQGSSLKGIKARENVQSSEDSESRKDSSSDVFSDSNKEGFLYFRQLTTEKGKRVSGSIRPWKQMYVVLRGSALYLQKDKKEQTGHSSAQSDEEQLIGINGCLIDISYSETKRKNVFRLTTSDREFLFQAEDRDDMLAWIKAIQENGNLNDEQTDQASRVLISKRIKEYNTMMSSSSNKTEPSPKAQRQTLSIRQQFRAGKPDDDISPPKDKGSWRRIMKKPFEKKPTTGGTFGVRLDDCPPAHNNKYVPLIVDVCCKLVEDRGLETTGIYRVPGNNAAISSMQEELNKGNTDIDIQDDKWRDLNVISSLLKSFFRKLPDPLFTNEKYNDFIEANRKEDPVERLKTLKRLILDLPDHHYETLKYLSAHLKTVADSSEKNKMEPRNLAIVFGPTLVRTSEDNMTHMVTHMPDQYKIVETLIQKHDWFFSEESADEPITTVHEESTVESQPVPNIDHLLPNIGRTGLSPGDVSDSATSDSAKSKGSWGSGKDQYSRELLVSSLFAAASRKRKKQKDKPQPSSSEDELDNVFYQKELSQVEFQKPDKQNVDKDMDLKAKANALSLKDADNVKGTNIIKEDKLEKDIMYSEPTSPCPPKLLEPPIANHGLQAPSNDKNIPQINFQMEESMSDSGTMLSTSSQASVQGSKPKVVSPEFKGSDFLTADVSSITSDYSTTSSTIYMTGLDSILISPEVQSVAESKGEEADDERSELVSEGRPMETDSENDFPIFASSLAFDRRHQSKAEEPSRNVQVNSEGSPSCTEGSITPKMDRRRFSSHKLIECDTLSRKKSVQQKTDSDCSAESKTEETLSDAQEAVKKGRSLSIVDPTGNNEPEEPAWRIKITERLKLRLKASADDMFGIGSQKANAAETRKKKNIRRRHTLGGHRDFAEISVLNAWKINEPSSKEAELSAVDRLKPKCPSQDLSISEWLVRERLRTSTSELSTVEPEEKHISETTGQKESASASPPPSSPSQVSTAVLPAGSDSPSHETAPQPDDQMNGDSFQSKNKNNFSPAVDAHPHKLSGTQVVRSRFYQYL</sequence>
<reference key="1">
    <citation type="journal article" date="2003" name="Gene Expr. Patterns">
        <title>A putative Xenopus Rho-GTPase activating protein (XrGAP) gene is expressed in the notochord and brain during the early embryogenesis.</title>
        <authorList>
            <person name="Kim J."/>
            <person name="Shim S."/>
            <person name="Choi S.-C."/>
            <person name="Han J.-K."/>
        </authorList>
    </citation>
    <scope>NUCLEOTIDE SEQUENCE [MRNA]</scope>
    <scope>DEVELOPMENTAL STAGE</scope>
    <source>
        <tissue>Embryo</tissue>
    </source>
</reference>
<evidence type="ECO:0000250" key="1"/>
<evidence type="ECO:0000255" key="2">
    <source>
        <dbReference type="PROSITE-ProRule" id="PRU00143"/>
    </source>
</evidence>
<evidence type="ECO:0000255" key="3">
    <source>
        <dbReference type="PROSITE-ProRule" id="PRU00145"/>
    </source>
</evidence>
<evidence type="ECO:0000255" key="4">
    <source>
        <dbReference type="PROSITE-ProRule" id="PRU00172"/>
    </source>
</evidence>
<evidence type="ECO:0000256" key="5">
    <source>
        <dbReference type="SAM" id="MobiDB-lite"/>
    </source>
</evidence>
<evidence type="ECO:0000269" key="6">
    <source>
    </source>
</evidence>
<keyword id="KW-0965">Cell junction</keyword>
<keyword id="KW-0963">Cytoplasm</keyword>
<keyword id="KW-0968">Cytoplasmic vesicle</keyword>
<keyword id="KW-0206">Cytoskeleton</keyword>
<keyword id="KW-0333">Golgi apparatus</keyword>
<keyword id="KW-0343">GTPase activation</keyword>
<keyword id="KW-0472">Membrane</keyword>
<keyword id="KW-1185">Reference proteome</keyword>
<proteinExistence type="evidence at transcript level"/>
<accession>Q71M21</accession>
<comment type="function">
    <text evidence="1">GTPase-activating protein (GAP) for rhoa and cdc42.</text>
</comment>
<comment type="subcellular location">
    <subcellularLocation>
        <location evidence="1">Golgi apparatus membrane</location>
        <topology evidence="1">Peripheral membrane protein</topology>
    </subcellularLocation>
    <subcellularLocation>
        <location evidence="1">Cell junction</location>
    </subcellularLocation>
    <subcellularLocation>
        <location evidence="1">Cytoplasmic vesicle membrane</location>
        <topology evidence="1">Peripheral membrane protein</topology>
    </subcellularLocation>
    <subcellularLocation>
        <location evidence="1">Cytoplasm</location>
        <location evidence="1">Cytoskeleton</location>
    </subcellularLocation>
</comment>
<comment type="developmental stage">
    <text evidence="6">Expressed in the differentiating tissues during early embryogenesis.</text>
</comment>
<gene>
    <name type="primary">arhgap21-b</name>
    <name type="synonym">xrgap</name>
</gene>